<organism>
    <name type="scientific">Aspergillus fumigatus (strain ATCC MYA-4609 / CBS 101355 / FGSC A1100 / Af293)</name>
    <name type="common">Neosartorya fumigata</name>
    <dbReference type="NCBI Taxonomy" id="330879"/>
    <lineage>
        <taxon>Eukaryota</taxon>
        <taxon>Fungi</taxon>
        <taxon>Dikarya</taxon>
        <taxon>Ascomycota</taxon>
        <taxon>Pezizomycotina</taxon>
        <taxon>Eurotiomycetes</taxon>
        <taxon>Eurotiomycetidae</taxon>
        <taxon>Eurotiales</taxon>
        <taxon>Aspergillaceae</taxon>
        <taxon>Aspergillus</taxon>
        <taxon>Aspergillus subgen. Fumigati</taxon>
    </lineage>
</organism>
<reference key="1">
    <citation type="submission" date="1998-05" db="EMBL/GenBank/DDBJ databases">
        <title>Expression and characterization of an allergen from Aspergillus fumigatus cDNA.</title>
        <authorList>
            <person name="Banerjee B."/>
            <person name="Kurup V.P."/>
        </authorList>
    </citation>
    <scope>NUCLEOTIDE SEQUENCE [MRNA]</scope>
    <scope>ALLERGEN</scope>
    <source>
        <strain>ATCC 42202 / AF-102 / Ag 507</strain>
    </source>
</reference>
<reference key="2">
    <citation type="submission" date="2002-10" db="EMBL/GenBank/DDBJ databases">
        <title>Identification of a protein related to the Saccharomyces cerevisiae CRH-protein family in Aspergillus fumigatus.</title>
        <authorList>
            <person name="Rodriguez-Pena J.M."/>
            <person name="Guillen M.V."/>
            <person name="Perez R.M."/>
            <person name="Nombela C."/>
            <person name="Arroyo J."/>
        </authorList>
    </citation>
    <scope>NUCLEOTIDE SEQUENCE [MRNA]</scope>
</reference>
<reference key="3">
    <citation type="journal article" date="2005" name="Nature">
        <title>Genomic sequence of the pathogenic and allergenic filamentous fungus Aspergillus fumigatus.</title>
        <authorList>
            <person name="Nierman W.C."/>
            <person name="Pain A."/>
            <person name="Anderson M.J."/>
            <person name="Wortman J.R."/>
            <person name="Kim H.S."/>
            <person name="Arroyo J."/>
            <person name="Berriman M."/>
            <person name="Abe K."/>
            <person name="Archer D.B."/>
            <person name="Bermejo C."/>
            <person name="Bennett J.W."/>
            <person name="Bowyer P."/>
            <person name="Chen D."/>
            <person name="Collins M."/>
            <person name="Coulsen R."/>
            <person name="Davies R."/>
            <person name="Dyer P.S."/>
            <person name="Farman M.L."/>
            <person name="Fedorova N."/>
            <person name="Fedorova N.D."/>
            <person name="Feldblyum T.V."/>
            <person name="Fischer R."/>
            <person name="Fosker N."/>
            <person name="Fraser A."/>
            <person name="Garcia J.L."/>
            <person name="Garcia M.J."/>
            <person name="Goble A."/>
            <person name="Goldman G.H."/>
            <person name="Gomi K."/>
            <person name="Griffith-Jones S."/>
            <person name="Gwilliam R."/>
            <person name="Haas B.J."/>
            <person name="Haas H."/>
            <person name="Harris D.E."/>
            <person name="Horiuchi H."/>
            <person name="Huang J."/>
            <person name="Humphray S."/>
            <person name="Jimenez J."/>
            <person name="Keller N."/>
            <person name="Khouri H."/>
            <person name="Kitamoto K."/>
            <person name="Kobayashi T."/>
            <person name="Konzack S."/>
            <person name="Kulkarni R."/>
            <person name="Kumagai T."/>
            <person name="Lafton A."/>
            <person name="Latge J.-P."/>
            <person name="Li W."/>
            <person name="Lord A."/>
            <person name="Lu C."/>
            <person name="Majoros W.H."/>
            <person name="May G.S."/>
            <person name="Miller B.L."/>
            <person name="Mohamoud Y."/>
            <person name="Molina M."/>
            <person name="Monod M."/>
            <person name="Mouyna I."/>
            <person name="Mulligan S."/>
            <person name="Murphy L.D."/>
            <person name="O'Neil S."/>
            <person name="Paulsen I."/>
            <person name="Penalva M.A."/>
            <person name="Pertea M."/>
            <person name="Price C."/>
            <person name="Pritchard B.L."/>
            <person name="Quail M.A."/>
            <person name="Rabbinowitsch E."/>
            <person name="Rawlins N."/>
            <person name="Rajandream M.A."/>
            <person name="Reichard U."/>
            <person name="Renauld H."/>
            <person name="Robson G.D."/>
            <person name="Rodriguez de Cordoba S."/>
            <person name="Rodriguez-Pena J.M."/>
            <person name="Ronning C.M."/>
            <person name="Rutter S."/>
            <person name="Salzberg S.L."/>
            <person name="Sanchez M."/>
            <person name="Sanchez-Ferrero J.C."/>
            <person name="Saunders D."/>
            <person name="Seeger K."/>
            <person name="Squares R."/>
            <person name="Squares S."/>
            <person name="Takeuchi M."/>
            <person name="Tekaia F."/>
            <person name="Turner G."/>
            <person name="Vazquez de Aldana C.R."/>
            <person name="Weidman J."/>
            <person name="White O."/>
            <person name="Woodward J.R."/>
            <person name="Yu J.-H."/>
            <person name="Fraser C.M."/>
            <person name="Galagan J.E."/>
            <person name="Asai K."/>
            <person name="Machida M."/>
            <person name="Hall N."/>
            <person name="Barrell B.G."/>
            <person name="Denning D.W."/>
        </authorList>
    </citation>
    <scope>NUCLEOTIDE SEQUENCE [LARGE SCALE GENOMIC DNA]</scope>
    <source>
        <strain>ATCC MYA-4609 / CBS 101355 / FGSC A1100 / Af293</strain>
    </source>
</reference>
<reference key="4">
    <citation type="journal article" date="1998" name="Int. Arch. Allergy Immunol.">
        <title>Recombinant Aspergillus fumigatus allergens: from the nucleotide sequences to clinical applications.</title>
        <authorList>
            <person name="Crameri R."/>
        </authorList>
    </citation>
    <scope>NUCLEOTIDE SEQUENCE [MRNA] OF 1-292</scope>
    <source>
        <strain>ATCC 42202 / AF-102 / Ag 507</strain>
    </source>
</reference>
<reference key="5">
    <citation type="journal article" date="2001" name="Electrophoresis">
        <title>Proteome analysis of Aspergillus fumigatus identifies glycosylphosphatidylinositol-anchored proteins associated to the cell wall biosynthesis.</title>
        <authorList>
            <person name="Bruneau J.-M."/>
            <person name="Magnin T."/>
            <person name="Tagat E."/>
            <person name="Legrand R."/>
            <person name="Bernard M."/>
            <person name="Diaquin M."/>
            <person name="Fudali C."/>
            <person name="Latge J.-P."/>
        </authorList>
    </citation>
    <scope>PROTEIN SEQUENCE OF 63-76; 183-186; 195-201 AND 204-216</scope>
    <scope>GPI-ANCHOR</scope>
</reference>
<reference key="6">
    <citation type="journal article" date="2003" name="Glycobiology">
        <title>Structures of the glycosylphosphatidylinositol membrane anchors from Aspergillus fumigatus membrane proteins.</title>
        <authorList>
            <person name="Fontaine T."/>
            <person name="Magnin T."/>
            <person name="Melhert A."/>
            <person name="Lamont D."/>
            <person name="Latge J.-P."/>
            <person name="Ferguson M.A.J."/>
        </authorList>
    </citation>
    <scope>STRUCTURE OF GPI-ANCHOR</scope>
</reference>
<reference evidence="11 12" key="7">
    <citation type="journal article" date="2019" name="Nat. Commun.">
        <title>Mechanisms of redundancy and specificity of the Aspergillus fumigatus Crh transglycosylases.</title>
        <authorList>
            <person name="Fang W."/>
            <person name="Sanz A.B."/>
            <person name="Bartual S.G."/>
            <person name="Wang B."/>
            <person name="Ferenbach A.T."/>
            <person name="Farkas V."/>
            <person name="Hurtado-Guerrero R."/>
            <person name="Arroyo J."/>
            <person name="van Aalten D.M.F."/>
        </authorList>
    </citation>
    <scope>X-RAY CRYSTALLOGRAPHY (2.25 ANGSTROMS) OF 22-266 IN COMPLEX WITH CHITOOLIGOSACCHARIDES</scope>
    <scope>DISULFIDE BOND</scope>
    <scope>FUNCTION</scope>
    <scope>DISRUPTION PHENOTYPE</scope>
    <scope>CATALYTIC ACTIVITY</scope>
    <scope>BIOPHYSICOCHEMICAL PROPERTIES</scope>
    <scope>SUBSTRATE SPECIFICITY</scope>
    <scope>MUTAGENESIS OF SER-109; GLU-119; ASP-121; GLU-123; ASN-135; PHE-137; TYR-145; ARG-203; TRP-207; THR-218 AND TRP-221</scope>
</reference>
<accession>Q8J0P4</accession>
<accession>O42800</accession>
<accession>O74682</accession>
<accession>Q4WRI5</accession>
<evidence type="ECO:0000250" key="1">
    <source>
        <dbReference type="UniProtKB" id="P27051"/>
    </source>
</evidence>
<evidence type="ECO:0000255" key="2"/>
<evidence type="ECO:0000255" key="3">
    <source>
        <dbReference type="PROSITE-ProRule" id="PRU01098"/>
    </source>
</evidence>
<evidence type="ECO:0000256" key="4">
    <source>
        <dbReference type="SAM" id="MobiDB-lite"/>
    </source>
</evidence>
<evidence type="ECO:0000269" key="5">
    <source>
    </source>
</evidence>
<evidence type="ECO:0000269" key="6">
    <source ref="1"/>
</evidence>
<evidence type="ECO:0000303" key="7">
    <source>
    </source>
</evidence>
<evidence type="ECO:0000303" key="8">
    <source ref="1"/>
</evidence>
<evidence type="ECO:0000303" key="9">
    <source ref="2"/>
</evidence>
<evidence type="ECO:0000305" key="10"/>
<evidence type="ECO:0007744" key="11">
    <source>
        <dbReference type="PDB" id="6IBU"/>
    </source>
</evidence>
<evidence type="ECO:0007744" key="12">
    <source>
        <dbReference type="PDB" id="6IBW"/>
    </source>
</evidence>
<evidence type="ECO:0007829" key="13">
    <source>
        <dbReference type="PDB" id="6IBU"/>
    </source>
</evidence>
<gene>
    <name evidence="7" type="primary">crh5</name>
    <name evidence="9" type="synonym">crf1</name>
    <name type="ORF">AFUA_1G16190</name>
</gene>
<dbReference type="EC" id="3.2.1.14" evidence="5"/>
<dbReference type="EC" id="2.4.-.-" evidence="5"/>
<dbReference type="EMBL" id="AF062651">
    <property type="protein sequence ID" value="AAC61261.1"/>
    <property type="status" value="ALT_FRAME"/>
    <property type="molecule type" value="mRNA"/>
</dbReference>
<dbReference type="EMBL" id="AY169706">
    <property type="protein sequence ID" value="AAN87849.1"/>
    <property type="molecule type" value="mRNA"/>
</dbReference>
<dbReference type="EMBL" id="AAHF01000004">
    <property type="protein sequence ID" value="EAL90947.1"/>
    <property type="molecule type" value="Genomic_DNA"/>
</dbReference>
<dbReference type="EMBL" id="AJ223327">
    <property type="protein sequence ID" value="CAA11266.1"/>
    <property type="status" value="ALT_INIT"/>
    <property type="molecule type" value="mRNA"/>
</dbReference>
<dbReference type="RefSeq" id="XP_752985.1">
    <property type="nucleotide sequence ID" value="XM_747892.1"/>
</dbReference>
<dbReference type="PDB" id="6IBU">
    <property type="method" value="X-ray"/>
    <property type="resolution" value="2.25 A"/>
    <property type="chains" value="A/B=22-266"/>
</dbReference>
<dbReference type="PDB" id="6IBW">
    <property type="method" value="X-ray"/>
    <property type="resolution" value="2.80 A"/>
    <property type="chains" value="A/B=22-266"/>
</dbReference>
<dbReference type="PDBsum" id="6IBU"/>
<dbReference type="PDBsum" id="6IBW"/>
<dbReference type="SMR" id="Q8J0P4"/>
<dbReference type="FunCoup" id="Q8J0P4">
    <property type="interactions" value="18"/>
</dbReference>
<dbReference type="STRING" id="330879.Q8J0P4"/>
<dbReference type="Allergome" id="3113">
    <property type="allergen name" value="Asp f 16.0101"/>
</dbReference>
<dbReference type="Allergome" id="3127">
    <property type="allergen name" value="Asp f 9.0101"/>
</dbReference>
<dbReference type="Allergome" id="68">
    <property type="allergen name" value="Asp f 16"/>
</dbReference>
<dbReference type="Allergome" id="79">
    <property type="allergen name" value="Asp f 9"/>
</dbReference>
<dbReference type="CAZy" id="GH16">
    <property type="family name" value="Glycoside Hydrolase Family 16"/>
</dbReference>
<dbReference type="GlyCosmos" id="Q8J0P4">
    <property type="glycosylation" value="1 site, No reported glycans"/>
</dbReference>
<dbReference type="EnsemblFungi" id="EAL90947">
    <property type="protein sequence ID" value="EAL90947"/>
    <property type="gene ID" value="AFUA_1G16190"/>
</dbReference>
<dbReference type="GeneID" id="3510010"/>
<dbReference type="KEGG" id="afm:AFUA_1G16190"/>
<dbReference type="VEuPathDB" id="FungiDB:Afu1g16190"/>
<dbReference type="eggNOG" id="ENOG502QQ71">
    <property type="taxonomic scope" value="Eukaryota"/>
</dbReference>
<dbReference type="HOGENOM" id="CLU_027506_3_2_1"/>
<dbReference type="InParanoid" id="Q8J0P4"/>
<dbReference type="OMA" id="DDDNWEG"/>
<dbReference type="OrthoDB" id="4781at2759"/>
<dbReference type="Proteomes" id="UP000002530">
    <property type="component" value="Chromosome 1"/>
</dbReference>
<dbReference type="GO" id="GO:0005576">
    <property type="term" value="C:extracellular region"/>
    <property type="evidence" value="ECO:0007669"/>
    <property type="project" value="UniProtKB-KW"/>
</dbReference>
<dbReference type="GO" id="GO:0009277">
    <property type="term" value="C:fungal-type cell wall"/>
    <property type="evidence" value="ECO:0000314"/>
    <property type="project" value="AspGD"/>
</dbReference>
<dbReference type="GO" id="GO:0005886">
    <property type="term" value="C:plasma membrane"/>
    <property type="evidence" value="ECO:0007669"/>
    <property type="project" value="UniProtKB-SubCell"/>
</dbReference>
<dbReference type="GO" id="GO:0098552">
    <property type="term" value="C:side of membrane"/>
    <property type="evidence" value="ECO:0007669"/>
    <property type="project" value="UniProtKB-KW"/>
</dbReference>
<dbReference type="GO" id="GO:0004553">
    <property type="term" value="F:hydrolase activity, hydrolyzing O-glycosyl compounds"/>
    <property type="evidence" value="ECO:0007669"/>
    <property type="project" value="InterPro"/>
</dbReference>
<dbReference type="GO" id="GO:0019863">
    <property type="term" value="F:IgE binding"/>
    <property type="evidence" value="ECO:0000314"/>
    <property type="project" value="AspGD"/>
</dbReference>
<dbReference type="GO" id="GO:0005975">
    <property type="term" value="P:carbohydrate metabolic process"/>
    <property type="evidence" value="ECO:0007669"/>
    <property type="project" value="InterPro"/>
</dbReference>
<dbReference type="GO" id="GO:0071555">
    <property type="term" value="P:cell wall organization"/>
    <property type="evidence" value="ECO:0007669"/>
    <property type="project" value="UniProtKB-KW"/>
</dbReference>
<dbReference type="CDD" id="cd02183">
    <property type="entry name" value="GH16_fungal_CRH1_transglycosylase"/>
    <property type="match status" value="1"/>
</dbReference>
<dbReference type="FunFam" id="2.60.120.200:FF:000162">
    <property type="entry name" value="Glycosidase"/>
    <property type="match status" value="1"/>
</dbReference>
<dbReference type="Gene3D" id="2.60.120.200">
    <property type="match status" value="1"/>
</dbReference>
<dbReference type="InterPro" id="IPR013320">
    <property type="entry name" value="ConA-like_dom_sf"/>
</dbReference>
<dbReference type="InterPro" id="IPR000757">
    <property type="entry name" value="GH16"/>
</dbReference>
<dbReference type="InterPro" id="IPR017168">
    <property type="entry name" value="Glyco_hydro_16_CRH1_prd"/>
</dbReference>
<dbReference type="InterPro" id="IPR050546">
    <property type="entry name" value="Glycosyl_Hydrlase_16"/>
</dbReference>
<dbReference type="PANTHER" id="PTHR10963:SF27">
    <property type="entry name" value="GLYCOSIDASE-RELATED"/>
    <property type="match status" value="1"/>
</dbReference>
<dbReference type="PANTHER" id="PTHR10963">
    <property type="entry name" value="GLYCOSYL HYDROLASE-RELATED"/>
    <property type="match status" value="1"/>
</dbReference>
<dbReference type="Pfam" id="PF00722">
    <property type="entry name" value="Glyco_hydro_16"/>
    <property type="match status" value="1"/>
</dbReference>
<dbReference type="PIRSF" id="PIRSF037299">
    <property type="entry name" value="Glycosidase_CRH1_prd"/>
    <property type="match status" value="1"/>
</dbReference>
<dbReference type="SUPFAM" id="SSF49899">
    <property type="entry name" value="Concanavalin A-like lectins/glucanases"/>
    <property type="match status" value="1"/>
</dbReference>
<dbReference type="PROSITE" id="PS51762">
    <property type="entry name" value="GH16_2"/>
    <property type="match status" value="1"/>
</dbReference>
<sequence length="395" mass="40284">MYFKYTAAALAAVLPLCSAQTWSKCNPLEKTCPPNKGLAASTYTADFTSASALDQWEVTAGKVPVGPQGAEFTVAKQGDAPTIDTDFYFFFGKAEVVMKAAPGTGVVSSIVLESDDLDEVDWEVLGGDTTQVQTNYFGKGDTTTYDRGTYVPVATPQETFHTYTIDWTKDAVTWSIDGAVVRTLTYNDAKGGTRFPQTPMRLRLGSWAGGDPSNPKGTIEWAGGLTDYSAGPYTMYVKSVRIENANPAESYTYSDNSGSWQSIKFDGSVDISSSSSVTSSTTSTASSASSTSSKTPSTSTLATSTKATPTPSGTSSGSNSSSSAEPTTTGGTGSSNTGSGSGSGSGSGSSSSTGSSTSAGASATPELSQGAAGSIKGSVTACALVFGAVAAVLAF</sequence>
<keyword id="KW-0002">3D-structure</keyword>
<keyword id="KW-0020">Allergen</keyword>
<keyword id="KW-1003">Cell membrane</keyword>
<keyword id="KW-0134">Cell wall</keyword>
<keyword id="KW-0961">Cell wall biogenesis/degradation</keyword>
<keyword id="KW-0903">Direct protein sequencing</keyword>
<keyword id="KW-1015">Disulfide bond</keyword>
<keyword id="KW-0325">Glycoprotein</keyword>
<keyword id="KW-0326">Glycosidase</keyword>
<keyword id="KW-0328">Glycosyltransferase</keyword>
<keyword id="KW-0336">GPI-anchor</keyword>
<keyword id="KW-0378">Hydrolase</keyword>
<keyword id="KW-0449">Lipoprotein</keyword>
<keyword id="KW-0472">Membrane</keyword>
<keyword id="KW-1185">Reference proteome</keyword>
<keyword id="KW-0964">Secreted</keyword>
<keyword id="KW-0732">Signal</keyword>
<keyword id="KW-0808">Transferase</keyword>
<feature type="signal peptide" evidence="2">
    <location>
        <begin position="1"/>
        <end position="19"/>
    </location>
</feature>
<feature type="chain" id="PRO_0000045432" description="Crh-like protein 5">
    <location>
        <begin position="20"/>
        <end position="370"/>
    </location>
</feature>
<feature type="propeptide" id="PRO_0000045433" description="Removed in mature form" evidence="2">
    <location>
        <begin position="371"/>
        <end position="395"/>
    </location>
</feature>
<feature type="domain" description="GH16" evidence="3">
    <location>
        <begin position="45"/>
        <end position="230"/>
    </location>
</feature>
<feature type="region of interest" description="Disordered" evidence="4">
    <location>
        <begin position="271"/>
        <end position="374"/>
    </location>
</feature>
<feature type="compositionally biased region" description="Low complexity" evidence="4">
    <location>
        <begin position="272"/>
        <end position="338"/>
    </location>
</feature>
<feature type="compositionally biased region" description="Low complexity" evidence="4">
    <location>
        <begin position="348"/>
        <end position="364"/>
    </location>
</feature>
<feature type="active site" description="Nucleophile" evidence="1">
    <location>
        <position position="119"/>
    </location>
</feature>
<feature type="active site" description="Proton donor" evidence="1">
    <location>
        <position position="123"/>
    </location>
</feature>
<feature type="binding site" evidence="5 12">
    <location>
        <position position="123"/>
    </location>
    <ligand>
        <name>chitin</name>
        <dbReference type="ChEBI" id="CHEBI:17029"/>
    </ligand>
</feature>
<feature type="binding site" evidence="5 12">
    <location>
        <position position="203"/>
    </location>
    <ligand>
        <name>chitin</name>
        <dbReference type="ChEBI" id="CHEBI:17029"/>
    </ligand>
</feature>
<feature type="binding site" evidence="5 12">
    <location>
        <position position="207"/>
    </location>
    <ligand>
        <name>chitin</name>
        <dbReference type="ChEBI" id="CHEBI:17029"/>
    </ligand>
</feature>
<feature type="binding site" evidence="5 12">
    <location>
        <position position="218"/>
    </location>
    <ligand>
        <name>chitin</name>
        <dbReference type="ChEBI" id="CHEBI:17029"/>
    </ligand>
</feature>
<feature type="lipid moiety-binding region" description="GPI-like-anchor amidated glycine" evidence="2">
    <location>
        <position position="370"/>
    </location>
</feature>
<feature type="glycosylation site" description="N-linked (GlcNAc...) asparagine" evidence="2">
    <location>
        <position position="319"/>
    </location>
</feature>
<feature type="disulfide bond" evidence="5 11 12">
    <location>
        <begin position="25"/>
        <end position="32"/>
    </location>
</feature>
<feature type="mutagenesis site" description="Leads to a four-fold increase of the transglycosylase activity." evidence="5">
    <original>S</original>
    <variation>A</variation>
    <location>
        <position position="109"/>
    </location>
</feature>
<feature type="mutagenesis site" description="Abolishes both the chitinase and the transglycosylase activities." evidence="5">
    <original>E</original>
    <variation>Q</variation>
    <location>
        <position position="119"/>
    </location>
</feature>
<feature type="mutagenesis site" description="Abolishes both the chitinase and the transglycosylase activities." evidence="5">
    <original>D</original>
    <variation>N</variation>
    <location>
        <position position="121"/>
    </location>
</feature>
<feature type="mutagenesis site" description="Abolishes both the chitinase and the transglycosylase activities." evidence="5">
    <original>E</original>
    <variation>Q</variation>
    <location>
        <position position="123"/>
    </location>
</feature>
<feature type="mutagenesis site" description="Results in a severe reduction of transglycosylase activity." evidence="5">
    <original>N</original>
    <variation>A</variation>
    <location>
        <position position="135"/>
    </location>
</feature>
<feature type="mutagenesis site" description="Abolishes both the chitinase and the transglycosylase activities." evidence="5">
    <original>F</original>
    <variation>A</variation>
    <location>
        <position position="137"/>
    </location>
</feature>
<feature type="mutagenesis site" description="Maintains 24% activity using L5-SR as acceptor, whereas it has only 8% activity when CH5-SR acted as acceptor." evidence="5">
    <original>Y</original>
    <variation>A</variation>
    <location>
        <position position="145"/>
    </location>
</feature>
<feature type="mutagenesis site" description="Does not lead to significant changes in the activity." evidence="5">
    <original>R</original>
    <variation>A</variation>
    <location>
        <position position="203"/>
    </location>
</feature>
<feature type="mutagenesis site" description="Abolishes both the chitinase and the transglycosylase activities." evidence="5">
    <original>W</original>
    <variation>A</variation>
    <location>
        <position position="207"/>
    </location>
</feature>
<feature type="mutagenesis site" description="Results in a severe reduction of transglycosylase activity." evidence="5">
    <original>T</original>
    <variation>A</variation>
    <location>
        <position position="218"/>
    </location>
</feature>
<feature type="mutagenesis site" description="Abolishes both the chitinase and the transglycosylase activities." evidence="5">
    <original>W</original>
    <variation>A</variation>
    <location>
        <position position="221"/>
    </location>
</feature>
<feature type="sequence conflict" description="In Ref. 1; AAC61261." evidence="10" ref="1">
    <original>EK</original>
    <variation>AE</variation>
    <location>
        <begin position="29"/>
        <end position="30"/>
    </location>
</feature>
<feature type="sequence conflict" description="In Ref. 1; AAC61261." evidence="10" ref="1">
    <original>Y</original>
    <variation>C</variation>
    <location>
        <position position="43"/>
    </location>
</feature>
<feature type="sequence conflict" description="In Ref. 1; AAC61261." evidence="10" ref="1">
    <original>WEV</original>
    <variation>LVR</variation>
    <location>
        <begin position="122"/>
        <end position="124"/>
    </location>
</feature>
<feature type="sequence conflict" description="In Ref. 1; AAC61261 and 2; AAN87849." evidence="10" ref="1 2">
    <original>T</original>
    <variation>S</variation>
    <location>
        <position position="332"/>
    </location>
</feature>
<feature type="turn" evidence="13">
    <location>
        <begin position="27"/>
        <end position="29"/>
    </location>
</feature>
<feature type="strand" evidence="13">
    <location>
        <begin position="35"/>
        <end position="37"/>
    </location>
</feature>
<feature type="strand" evidence="13">
    <location>
        <begin position="40"/>
        <end position="46"/>
    </location>
</feature>
<feature type="helix" evidence="13">
    <location>
        <begin position="51"/>
        <end position="53"/>
    </location>
</feature>
<feature type="strand" evidence="13">
    <location>
        <begin position="56"/>
        <end position="61"/>
    </location>
</feature>
<feature type="strand" evidence="13">
    <location>
        <begin position="69"/>
        <end position="74"/>
    </location>
</feature>
<feature type="strand" evidence="13">
    <location>
        <begin position="82"/>
        <end position="89"/>
    </location>
</feature>
<feature type="strand" evidence="13">
    <location>
        <begin position="91"/>
        <end position="99"/>
    </location>
</feature>
<feature type="strand" evidence="13">
    <location>
        <begin position="103"/>
        <end position="114"/>
    </location>
</feature>
<feature type="strand" evidence="13">
    <location>
        <begin position="119"/>
        <end position="126"/>
    </location>
</feature>
<feature type="strand" evidence="13">
    <location>
        <begin position="131"/>
        <end position="138"/>
    </location>
</feature>
<feature type="strand" evidence="13">
    <location>
        <begin position="143"/>
        <end position="145"/>
    </location>
</feature>
<feature type="strand" evidence="13">
    <location>
        <begin position="149"/>
        <end position="152"/>
    </location>
</feature>
<feature type="turn" evidence="13">
    <location>
        <begin position="156"/>
        <end position="158"/>
    </location>
</feature>
<feature type="strand" evidence="13">
    <location>
        <begin position="161"/>
        <end position="167"/>
    </location>
</feature>
<feature type="strand" evidence="13">
    <location>
        <begin position="169"/>
        <end position="176"/>
    </location>
</feature>
<feature type="strand" evidence="13">
    <location>
        <begin position="179"/>
        <end position="185"/>
    </location>
</feature>
<feature type="turn" evidence="13">
    <location>
        <begin position="186"/>
        <end position="189"/>
    </location>
</feature>
<feature type="helix" evidence="13">
    <location>
        <begin position="190"/>
        <end position="192"/>
    </location>
</feature>
<feature type="strand" evidence="13">
    <location>
        <begin position="200"/>
        <end position="208"/>
    </location>
</feature>
<feature type="helix" evidence="13">
    <location>
        <begin position="216"/>
        <end position="222"/>
    </location>
</feature>
<feature type="helix" evidence="13">
    <location>
        <begin position="228"/>
        <end position="230"/>
    </location>
</feature>
<feature type="strand" evidence="13">
    <location>
        <begin position="233"/>
        <end position="246"/>
    </location>
</feature>
<feature type="strand" evidence="13">
    <location>
        <begin position="249"/>
        <end position="253"/>
    </location>
</feature>
<feature type="strand" evidence="13">
    <location>
        <begin position="255"/>
        <end position="257"/>
    </location>
</feature>
<feature type="helix" evidence="13">
    <location>
        <begin position="260"/>
        <end position="262"/>
    </location>
</feature>
<name>CRH5_ASPFU</name>
<protein>
    <recommendedName>
        <fullName evidence="7">Crh-like protein 5</fullName>
    </recommendedName>
    <allergenName evidence="8">Asp f 9</allergenName>
    <domain>
        <recommendedName>
            <fullName evidence="7">Chitinase crh5</fullName>
            <ecNumber evidence="5">3.2.1.14</ecNumber>
        </recommendedName>
    </domain>
    <domain>
        <recommendedName>
            <fullName evidence="7">Chitin transglycosylase crh5</fullName>
            <ecNumber evidence="5">2.4.-.-</ecNumber>
        </recommendedName>
    </domain>
</protein>
<comment type="function">
    <text evidence="5">Dual chitinase/transglycosylase that plays a role in cell wall architecture (PubMed:30971696). Chitinase and transglycosylase activities are coupled (PubMed:30971696). Required for the polysaccharide cross-linking at the septa and the cell wall (PubMed:30971696). More specifically, transfers chitin to 1,6-beta-glucan in the cell wall (PubMed:30971696). Chr5 shows acceptor substrate promiscuity and is also able to cross-link chitin to chitin (PubMed:30971696).</text>
</comment>
<comment type="catalytic activity">
    <reaction evidence="5">
        <text>Random endo-hydrolysis of N-acetyl-beta-D-glucosaminide (1-&gt;4)-beta-linkages in chitin and chitodextrins.</text>
        <dbReference type="EC" id="3.2.1.14"/>
    </reaction>
</comment>
<comment type="biophysicochemical properties">
    <kinetics>
        <KM evidence="5">3.5 uM for SR-linked chitopentaose</KM>
        <KM evidence="5">12 uM for SR-linked laminaripentaose</KM>
    </kinetics>
    <phDependence>
        <text evidence="5">Optimum pH is 4.3 to 4.9.</text>
    </phDependence>
</comment>
<comment type="subcellular location">
    <subcellularLocation>
        <location evidence="2">Cell membrane</location>
        <topology evidence="2">Lipid-anchor</topology>
        <topology evidence="2">GPI-anchor</topology>
    </subcellularLocation>
    <subcellularLocation>
        <location evidence="10">Secreted</location>
        <location evidence="10">Cell wall</location>
    </subcellularLocation>
</comment>
<comment type="PTM">
    <text evidence="10">The GPI-like anchor contains a phosphoceramide lipid group. The anchor position has not been determined.</text>
</comment>
<comment type="disruption phenotype">
    <text evidence="5">Does not affect growth rate, germination or sporulation and displays only minor sensitivity to high concentrations of Congo Red, even when all crh family members are deleted.</text>
</comment>
<comment type="allergen">
    <text evidence="6">Causes an allergic reaction in human.</text>
</comment>
<comment type="similarity">
    <text evidence="10">Belongs to the glycosyl hydrolase 16 family. CRH1 subfamily.</text>
</comment>
<comment type="sequence caution" evidence="10">
    <conflict type="frameshift">
        <sequence resource="EMBL-CDS" id="AAC61261"/>
    </conflict>
</comment>
<comment type="sequence caution" evidence="10">
    <conflict type="erroneous initiation">
        <sequence resource="EMBL-CDS" id="CAA11266"/>
    </conflict>
    <text>Extended N-terminus.</text>
</comment>
<proteinExistence type="evidence at protein level"/>